<sequence>MIQKNAILDVADNSGARKVLCIGFLGGKKSATVGDVIVVSAKVAAPKGRVTKGKVYKAVIVRVKGPIRRLDGSIIRFSSNAVVLVNDQGDPLGTRVFGPVRKFPVGEFTKVMSLAVEVL</sequence>
<reference key="1">
    <citation type="journal article" date="2006" name="PLoS Genet.">
        <title>Comparative genomics of emerging human ehrlichiosis agents.</title>
        <authorList>
            <person name="Dunning Hotopp J.C."/>
            <person name="Lin M."/>
            <person name="Madupu R."/>
            <person name="Crabtree J."/>
            <person name="Angiuoli S.V."/>
            <person name="Eisen J.A."/>
            <person name="Seshadri R."/>
            <person name="Ren Q."/>
            <person name="Wu M."/>
            <person name="Utterback T.R."/>
            <person name="Smith S."/>
            <person name="Lewis M."/>
            <person name="Khouri H."/>
            <person name="Zhang C."/>
            <person name="Niu H."/>
            <person name="Lin Q."/>
            <person name="Ohashi N."/>
            <person name="Zhi N."/>
            <person name="Nelson W.C."/>
            <person name="Brinkac L.M."/>
            <person name="Dodson R.J."/>
            <person name="Rosovitz M.J."/>
            <person name="Sundaram J.P."/>
            <person name="Daugherty S.C."/>
            <person name="Davidsen T."/>
            <person name="Durkin A.S."/>
            <person name="Gwinn M.L."/>
            <person name="Haft D.H."/>
            <person name="Selengut J.D."/>
            <person name="Sullivan S.A."/>
            <person name="Zafar N."/>
            <person name="Zhou L."/>
            <person name="Benahmed F."/>
            <person name="Forberger H."/>
            <person name="Halpin R."/>
            <person name="Mulligan S."/>
            <person name="Robinson J."/>
            <person name="White O."/>
            <person name="Rikihisa Y."/>
            <person name="Tettelin H."/>
        </authorList>
    </citation>
    <scope>NUCLEOTIDE SEQUENCE [LARGE SCALE GENOMIC DNA]</scope>
    <source>
        <strain>HZ</strain>
    </source>
</reference>
<protein>
    <recommendedName>
        <fullName evidence="1">Large ribosomal subunit protein uL14</fullName>
    </recommendedName>
    <alternativeName>
        <fullName evidence="2">50S ribosomal protein L14</fullName>
    </alternativeName>
</protein>
<feature type="chain" id="PRO_0000355804" description="Large ribosomal subunit protein uL14">
    <location>
        <begin position="1"/>
        <end position="119"/>
    </location>
</feature>
<proteinExistence type="inferred from homology"/>
<gene>
    <name evidence="1" type="primary">rplN</name>
    <name type="ordered locus">APH_0290</name>
</gene>
<evidence type="ECO:0000255" key="1">
    <source>
        <dbReference type="HAMAP-Rule" id="MF_01367"/>
    </source>
</evidence>
<evidence type="ECO:0000305" key="2"/>
<keyword id="KW-0687">Ribonucleoprotein</keyword>
<keyword id="KW-0689">Ribosomal protein</keyword>
<keyword id="KW-0694">RNA-binding</keyword>
<keyword id="KW-0699">rRNA-binding</keyword>
<comment type="function">
    <text evidence="1">Binds to 23S rRNA. Forms part of two intersubunit bridges in the 70S ribosome.</text>
</comment>
<comment type="subunit">
    <text evidence="1">Part of the 50S ribosomal subunit. Forms a cluster with proteins L3 and L19. In the 70S ribosome, L14 and L19 interact and together make contacts with the 16S rRNA in bridges B5 and B8.</text>
</comment>
<comment type="similarity">
    <text evidence="1">Belongs to the universal ribosomal protein uL14 family.</text>
</comment>
<accession>Q2GL49</accession>
<name>RL14_ANAPZ</name>
<dbReference type="EMBL" id="CP000235">
    <property type="protein sequence ID" value="ABD43433.1"/>
    <property type="molecule type" value="Genomic_DNA"/>
</dbReference>
<dbReference type="RefSeq" id="WP_011450425.1">
    <property type="nucleotide sequence ID" value="NC_007797.1"/>
</dbReference>
<dbReference type="SMR" id="Q2GL49"/>
<dbReference type="STRING" id="212042.APH_0290"/>
<dbReference type="PaxDb" id="212042-APH_0290"/>
<dbReference type="EnsemblBacteria" id="ABD43433">
    <property type="protein sequence ID" value="ABD43433"/>
    <property type="gene ID" value="APH_0290"/>
</dbReference>
<dbReference type="GeneID" id="92747513"/>
<dbReference type="KEGG" id="aph:APH_0290"/>
<dbReference type="eggNOG" id="COG0093">
    <property type="taxonomic scope" value="Bacteria"/>
</dbReference>
<dbReference type="HOGENOM" id="CLU_095071_2_2_5"/>
<dbReference type="Proteomes" id="UP000001943">
    <property type="component" value="Chromosome"/>
</dbReference>
<dbReference type="GO" id="GO:0022625">
    <property type="term" value="C:cytosolic large ribosomal subunit"/>
    <property type="evidence" value="ECO:0007669"/>
    <property type="project" value="TreeGrafter"/>
</dbReference>
<dbReference type="GO" id="GO:0070180">
    <property type="term" value="F:large ribosomal subunit rRNA binding"/>
    <property type="evidence" value="ECO:0007669"/>
    <property type="project" value="TreeGrafter"/>
</dbReference>
<dbReference type="GO" id="GO:0003735">
    <property type="term" value="F:structural constituent of ribosome"/>
    <property type="evidence" value="ECO:0007669"/>
    <property type="project" value="InterPro"/>
</dbReference>
<dbReference type="GO" id="GO:0006412">
    <property type="term" value="P:translation"/>
    <property type="evidence" value="ECO:0007669"/>
    <property type="project" value="UniProtKB-UniRule"/>
</dbReference>
<dbReference type="CDD" id="cd00337">
    <property type="entry name" value="Ribosomal_uL14"/>
    <property type="match status" value="1"/>
</dbReference>
<dbReference type="Gene3D" id="2.40.150.20">
    <property type="entry name" value="Ribosomal protein L14"/>
    <property type="match status" value="1"/>
</dbReference>
<dbReference type="HAMAP" id="MF_01367">
    <property type="entry name" value="Ribosomal_uL14"/>
    <property type="match status" value="1"/>
</dbReference>
<dbReference type="InterPro" id="IPR000218">
    <property type="entry name" value="Ribosomal_uL14"/>
</dbReference>
<dbReference type="InterPro" id="IPR005745">
    <property type="entry name" value="Ribosomal_uL14_bac-type"/>
</dbReference>
<dbReference type="InterPro" id="IPR019972">
    <property type="entry name" value="Ribosomal_uL14_CS"/>
</dbReference>
<dbReference type="InterPro" id="IPR036853">
    <property type="entry name" value="Ribosomal_uL14_sf"/>
</dbReference>
<dbReference type="NCBIfam" id="TIGR01067">
    <property type="entry name" value="rplN_bact"/>
    <property type="match status" value="1"/>
</dbReference>
<dbReference type="PANTHER" id="PTHR11761">
    <property type="entry name" value="50S/60S RIBOSOMAL PROTEIN L14/L23"/>
    <property type="match status" value="1"/>
</dbReference>
<dbReference type="PANTHER" id="PTHR11761:SF3">
    <property type="entry name" value="LARGE RIBOSOMAL SUBUNIT PROTEIN UL14M"/>
    <property type="match status" value="1"/>
</dbReference>
<dbReference type="Pfam" id="PF00238">
    <property type="entry name" value="Ribosomal_L14"/>
    <property type="match status" value="1"/>
</dbReference>
<dbReference type="SMART" id="SM01374">
    <property type="entry name" value="Ribosomal_L14"/>
    <property type="match status" value="1"/>
</dbReference>
<dbReference type="SUPFAM" id="SSF50193">
    <property type="entry name" value="Ribosomal protein L14"/>
    <property type="match status" value="1"/>
</dbReference>
<dbReference type="PROSITE" id="PS00049">
    <property type="entry name" value="RIBOSOMAL_L14"/>
    <property type="match status" value="1"/>
</dbReference>
<organism>
    <name type="scientific">Anaplasma phagocytophilum (strain HZ)</name>
    <dbReference type="NCBI Taxonomy" id="212042"/>
    <lineage>
        <taxon>Bacteria</taxon>
        <taxon>Pseudomonadati</taxon>
        <taxon>Pseudomonadota</taxon>
        <taxon>Alphaproteobacteria</taxon>
        <taxon>Rickettsiales</taxon>
        <taxon>Anaplasmataceae</taxon>
        <taxon>Anaplasma</taxon>
        <taxon>phagocytophilum group</taxon>
    </lineage>
</organism>